<proteinExistence type="inferred from homology"/>
<accession>A3MWJ5</accession>
<feature type="chain" id="PRO_1000084859" description="Ornithine carbamoyltransferase">
    <location>
        <begin position="1"/>
        <end position="308"/>
    </location>
</feature>
<feature type="binding site" evidence="2">
    <location>
        <begin position="52"/>
        <end position="55"/>
    </location>
    <ligand>
        <name>carbamoyl phosphate</name>
        <dbReference type="ChEBI" id="CHEBI:58228"/>
    </ligand>
</feature>
<feature type="binding site" evidence="2">
    <location>
        <position position="79"/>
    </location>
    <ligand>
        <name>carbamoyl phosphate</name>
        <dbReference type="ChEBI" id="CHEBI:58228"/>
    </ligand>
</feature>
<feature type="binding site" evidence="2">
    <location>
        <position position="103"/>
    </location>
    <ligand>
        <name>carbamoyl phosphate</name>
        <dbReference type="ChEBI" id="CHEBI:58228"/>
    </ligand>
</feature>
<feature type="binding site" evidence="2">
    <location>
        <begin position="130"/>
        <end position="133"/>
    </location>
    <ligand>
        <name>carbamoyl phosphate</name>
        <dbReference type="ChEBI" id="CHEBI:58228"/>
    </ligand>
</feature>
<feature type="binding site" evidence="2">
    <location>
        <position position="162"/>
    </location>
    <ligand>
        <name>L-ornithine</name>
        <dbReference type="ChEBI" id="CHEBI:46911"/>
    </ligand>
</feature>
<feature type="binding site" evidence="2">
    <location>
        <position position="224"/>
    </location>
    <ligand>
        <name>L-ornithine</name>
        <dbReference type="ChEBI" id="CHEBI:46911"/>
    </ligand>
</feature>
<feature type="binding site" evidence="2">
    <location>
        <begin position="228"/>
        <end position="229"/>
    </location>
    <ligand>
        <name>L-ornithine</name>
        <dbReference type="ChEBI" id="CHEBI:46911"/>
    </ligand>
</feature>
<feature type="binding site" evidence="2">
    <location>
        <begin position="264"/>
        <end position="265"/>
    </location>
    <ligand>
        <name>carbamoyl phosphate</name>
        <dbReference type="ChEBI" id="CHEBI:58228"/>
    </ligand>
</feature>
<feature type="binding site" evidence="2">
    <location>
        <position position="292"/>
    </location>
    <ligand>
        <name>carbamoyl phosphate</name>
        <dbReference type="ChEBI" id="CHEBI:58228"/>
    </ligand>
</feature>
<comment type="function">
    <text evidence="1">Reversibly catalyzes the transfer of the carbamoyl group from carbamoyl phosphate (CP) to the N(epsilon) atom of ornithine (ORN) to produce L-citrulline.</text>
</comment>
<comment type="catalytic activity">
    <reaction evidence="2">
        <text>carbamoyl phosphate + L-ornithine = L-citrulline + phosphate + H(+)</text>
        <dbReference type="Rhea" id="RHEA:19513"/>
        <dbReference type="ChEBI" id="CHEBI:15378"/>
        <dbReference type="ChEBI" id="CHEBI:43474"/>
        <dbReference type="ChEBI" id="CHEBI:46911"/>
        <dbReference type="ChEBI" id="CHEBI:57743"/>
        <dbReference type="ChEBI" id="CHEBI:58228"/>
        <dbReference type="EC" id="2.1.3.3"/>
    </reaction>
</comment>
<comment type="pathway">
    <text evidence="2">Amino-acid biosynthesis; L-arginine biosynthesis; L-arginine from L-ornithine and carbamoyl phosphate: step 1/3.</text>
</comment>
<comment type="subcellular location">
    <subcellularLocation>
        <location evidence="2">Cytoplasm</location>
    </subcellularLocation>
</comment>
<comment type="similarity">
    <text evidence="2">Belongs to the aspartate/ornithine carbamoyltransferase superfamily. OTCase family.</text>
</comment>
<keyword id="KW-0028">Amino-acid biosynthesis</keyword>
<keyword id="KW-0055">Arginine biosynthesis</keyword>
<keyword id="KW-0963">Cytoplasm</keyword>
<keyword id="KW-0808">Transferase</keyword>
<dbReference type="EC" id="2.1.3.3" evidence="2"/>
<dbReference type="EMBL" id="CP000561">
    <property type="protein sequence ID" value="ABO09012.1"/>
    <property type="molecule type" value="Genomic_DNA"/>
</dbReference>
<dbReference type="RefSeq" id="WP_011850270.1">
    <property type="nucleotide sequence ID" value="NC_009073.1"/>
</dbReference>
<dbReference type="SMR" id="A3MWJ5"/>
<dbReference type="STRING" id="410359.Pcal_1594"/>
<dbReference type="GeneID" id="4909135"/>
<dbReference type="KEGG" id="pcl:Pcal_1594"/>
<dbReference type="eggNOG" id="arCOG00912">
    <property type="taxonomic scope" value="Archaea"/>
</dbReference>
<dbReference type="HOGENOM" id="CLU_043846_3_2_2"/>
<dbReference type="OrthoDB" id="4696at2157"/>
<dbReference type="UniPathway" id="UPA00068">
    <property type="reaction ID" value="UER00112"/>
</dbReference>
<dbReference type="Proteomes" id="UP000001431">
    <property type="component" value="Chromosome"/>
</dbReference>
<dbReference type="GO" id="GO:0005737">
    <property type="term" value="C:cytoplasm"/>
    <property type="evidence" value="ECO:0007669"/>
    <property type="project" value="UniProtKB-SubCell"/>
</dbReference>
<dbReference type="GO" id="GO:0016597">
    <property type="term" value="F:amino acid binding"/>
    <property type="evidence" value="ECO:0007669"/>
    <property type="project" value="InterPro"/>
</dbReference>
<dbReference type="GO" id="GO:0004585">
    <property type="term" value="F:ornithine carbamoyltransferase activity"/>
    <property type="evidence" value="ECO:0007669"/>
    <property type="project" value="UniProtKB-UniRule"/>
</dbReference>
<dbReference type="GO" id="GO:0042450">
    <property type="term" value="P:arginine biosynthetic process via ornithine"/>
    <property type="evidence" value="ECO:0007669"/>
    <property type="project" value="TreeGrafter"/>
</dbReference>
<dbReference type="GO" id="GO:0019240">
    <property type="term" value="P:citrulline biosynthetic process"/>
    <property type="evidence" value="ECO:0007669"/>
    <property type="project" value="TreeGrafter"/>
</dbReference>
<dbReference type="GO" id="GO:0006526">
    <property type="term" value="P:L-arginine biosynthetic process"/>
    <property type="evidence" value="ECO:0007669"/>
    <property type="project" value="UniProtKB-UniRule"/>
</dbReference>
<dbReference type="FunFam" id="3.40.50.1370:FF:000008">
    <property type="entry name" value="Ornithine carbamoyltransferase"/>
    <property type="match status" value="1"/>
</dbReference>
<dbReference type="Gene3D" id="3.40.50.1370">
    <property type="entry name" value="Aspartate/ornithine carbamoyltransferase"/>
    <property type="match status" value="2"/>
</dbReference>
<dbReference type="HAMAP" id="MF_01109">
    <property type="entry name" value="OTCase"/>
    <property type="match status" value="1"/>
</dbReference>
<dbReference type="InterPro" id="IPR006132">
    <property type="entry name" value="Asp/Orn_carbamoyltranf_P-bd"/>
</dbReference>
<dbReference type="InterPro" id="IPR006130">
    <property type="entry name" value="Asp/Orn_carbamoylTrfase"/>
</dbReference>
<dbReference type="InterPro" id="IPR036901">
    <property type="entry name" value="Asp/Orn_carbamoylTrfase_sf"/>
</dbReference>
<dbReference type="InterPro" id="IPR006131">
    <property type="entry name" value="Asp_carbamoyltransf_Asp/Orn-bd"/>
</dbReference>
<dbReference type="InterPro" id="IPR002292">
    <property type="entry name" value="Orn/put_carbamltrans"/>
</dbReference>
<dbReference type="InterPro" id="IPR024904">
    <property type="entry name" value="OTCase_ArgI"/>
</dbReference>
<dbReference type="NCBIfam" id="TIGR00658">
    <property type="entry name" value="orni_carb_tr"/>
    <property type="match status" value="1"/>
</dbReference>
<dbReference type="NCBIfam" id="NF001986">
    <property type="entry name" value="PRK00779.1"/>
    <property type="match status" value="1"/>
</dbReference>
<dbReference type="PANTHER" id="PTHR45753">
    <property type="entry name" value="ORNITHINE CARBAMOYLTRANSFERASE, MITOCHONDRIAL"/>
    <property type="match status" value="1"/>
</dbReference>
<dbReference type="PANTHER" id="PTHR45753:SF3">
    <property type="entry name" value="ORNITHINE TRANSCARBAMYLASE, MITOCHONDRIAL"/>
    <property type="match status" value="1"/>
</dbReference>
<dbReference type="Pfam" id="PF00185">
    <property type="entry name" value="OTCace"/>
    <property type="match status" value="1"/>
</dbReference>
<dbReference type="Pfam" id="PF02729">
    <property type="entry name" value="OTCace_N"/>
    <property type="match status" value="1"/>
</dbReference>
<dbReference type="PRINTS" id="PR00100">
    <property type="entry name" value="AOTCASE"/>
</dbReference>
<dbReference type="PRINTS" id="PR00102">
    <property type="entry name" value="OTCASE"/>
</dbReference>
<dbReference type="SUPFAM" id="SSF53671">
    <property type="entry name" value="Aspartate/ornithine carbamoyltransferase"/>
    <property type="match status" value="1"/>
</dbReference>
<dbReference type="PROSITE" id="PS00097">
    <property type="entry name" value="CARBAMOYLTRANSFERASE"/>
    <property type="match status" value="1"/>
</dbReference>
<gene>
    <name evidence="2" type="primary">argF</name>
    <name type="ordered locus">Pcal_1594</name>
</gene>
<sequence>MKHLLTLMEFKPHEVEDLLRISRDFKARYMAGEVYTPLFPGRIVMLYFEKPSTRTRLSLTAAAAQLGMQAVYTAPGELQIGRGETIADTMRVVSRYAAAVAARVYKHETLEEMARYSSIPVINALSDRHHPLQALADALTLWERSGRLHGLKVAFVGDVSNNVATSLAVVGAKLGWEVRLVGPKPLWNQKLVEELAEDLAKTGGQIYFTDSMNEVAGVDGVYTDVWVSMGFEKEAEERRRLLKPYQVNQRVMDIAGKRAVFLHCLPAHRGEEVTDEVIDGPQSAVWDQAENRMHTAKAVFAYLLNKRA</sequence>
<organism>
    <name type="scientific">Pyrobaculum calidifontis (strain DSM 21063 / JCM 11548 / VA1)</name>
    <dbReference type="NCBI Taxonomy" id="410359"/>
    <lineage>
        <taxon>Archaea</taxon>
        <taxon>Thermoproteota</taxon>
        <taxon>Thermoprotei</taxon>
        <taxon>Thermoproteales</taxon>
        <taxon>Thermoproteaceae</taxon>
        <taxon>Pyrobaculum</taxon>
    </lineage>
</organism>
<evidence type="ECO:0000250" key="1"/>
<evidence type="ECO:0000255" key="2">
    <source>
        <dbReference type="HAMAP-Rule" id="MF_01109"/>
    </source>
</evidence>
<name>OTC_PYRCJ</name>
<reference key="1">
    <citation type="submission" date="2007-02" db="EMBL/GenBank/DDBJ databases">
        <title>Complete sequence of Pyrobaculum calidifontis JCM 11548.</title>
        <authorList>
            <consortium name="US DOE Joint Genome Institute"/>
            <person name="Copeland A."/>
            <person name="Lucas S."/>
            <person name="Lapidus A."/>
            <person name="Barry K."/>
            <person name="Glavina del Rio T."/>
            <person name="Dalin E."/>
            <person name="Tice H."/>
            <person name="Pitluck S."/>
            <person name="Chain P."/>
            <person name="Malfatti S."/>
            <person name="Shin M."/>
            <person name="Vergez L."/>
            <person name="Schmutz J."/>
            <person name="Larimer F."/>
            <person name="Land M."/>
            <person name="Hauser L."/>
            <person name="Kyrpides N."/>
            <person name="Mikhailova N."/>
            <person name="Cozen A.E."/>
            <person name="Fitz-Gibbon S.T."/>
            <person name="House C.H."/>
            <person name="Saltikov C."/>
            <person name="Lowe T.M."/>
            <person name="Richardson P."/>
        </authorList>
    </citation>
    <scope>NUCLEOTIDE SEQUENCE [LARGE SCALE GENOMIC DNA]</scope>
    <source>
        <strain>DSM 21063 / JCM 11548 / VA1</strain>
    </source>
</reference>
<protein>
    <recommendedName>
        <fullName evidence="2">Ornithine carbamoyltransferase</fullName>
        <shortName evidence="2">OTCase</shortName>
        <ecNumber evidence="2">2.1.3.3</ecNumber>
    </recommendedName>
</protein>